<gene>
    <name evidence="1" type="primary">glmM</name>
    <name type="ordered locus">lp_0820</name>
</gene>
<comment type="function">
    <text evidence="1">Catalyzes the conversion of glucosamine-6-phosphate to glucosamine-1-phosphate.</text>
</comment>
<comment type="catalytic activity">
    <reaction evidence="1">
        <text>alpha-D-glucosamine 1-phosphate = D-glucosamine 6-phosphate</text>
        <dbReference type="Rhea" id="RHEA:23424"/>
        <dbReference type="ChEBI" id="CHEBI:58516"/>
        <dbReference type="ChEBI" id="CHEBI:58725"/>
        <dbReference type="EC" id="5.4.2.10"/>
    </reaction>
</comment>
<comment type="cofactor">
    <cofactor evidence="1">
        <name>Mg(2+)</name>
        <dbReference type="ChEBI" id="CHEBI:18420"/>
    </cofactor>
    <text evidence="1">Binds 1 Mg(2+) ion per subunit.</text>
</comment>
<comment type="PTM">
    <text evidence="1">Activated by phosphorylation.</text>
</comment>
<comment type="similarity">
    <text evidence="1">Belongs to the phosphohexose mutase family.</text>
</comment>
<feature type="chain" id="PRO_0000147904" description="Phosphoglucosamine mutase">
    <location>
        <begin position="1"/>
        <end position="451"/>
    </location>
</feature>
<feature type="active site" description="Phosphoserine intermediate" evidence="1">
    <location>
        <position position="103"/>
    </location>
</feature>
<feature type="binding site" description="via phosphate group" evidence="1">
    <location>
        <position position="103"/>
    </location>
    <ligand>
        <name>Mg(2+)</name>
        <dbReference type="ChEBI" id="CHEBI:18420"/>
    </ligand>
</feature>
<feature type="binding site" evidence="1">
    <location>
        <position position="243"/>
    </location>
    <ligand>
        <name>Mg(2+)</name>
        <dbReference type="ChEBI" id="CHEBI:18420"/>
    </ligand>
</feature>
<feature type="binding site" evidence="1">
    <location>
        <position position="245"/>
    </location>
    <ligand>
        <name>Mg(2+)</name>
        <dbReference type="ChEBI" id="CHEBI:18420"/>
    </ligand>
</feature>
<feature type="binding site" evidence="1">
    <location>
        <position position="247"/>
    </location>
    <ligand>
        <name>Mg(2+)</name>
        <dbReference type="ChEBI" id="CHEBI:18420"/>
    </ligand>
</feature>
<feature type="modified residue" description="Phosphoserine" evidence="1">
    <location>
        <position position="103"/>
    </location>
</feature>
<accession>Q88YE8</accession>
<accession>F9UM39</accession>
<reference key="1">
    <citation type="journal article" date="2003" name="Proc. Natl. Acad. Sci. U.S.A.">
        <title>Complete genome sequence of Lactobacillus plantarum WCFS1.</title>
        <authorList>
            <person name="Kleerebezem M."/>
            <person name="Boekhorst J."/>
            <person name="van Kranenburg R."/>
            <person name="Molenaar D."/>
            <person name="Kuipers O.P."/>
            <person name="Leer R."/>
            <person name="Tarchini R."/>
            <person name="Peters S.A."/>
            <person name="Sandbrink H.M."/>
            <person name="Fiers M.W.E.J."/>
            <person name="Stiekema W."/>
            <person name="Klein Lankhorst R.M."/>
            <person name="Bron P.A."/>
            <person name="Hoffer S.M."/>
            <person name="Nierop Groot M.N."/>
            <person name="Kerkhoven R."/>
            <person name="De Vries M."/>
            <person name="Ursing B."/>
            <person name="De Vos W.M."/>
            <person name="Siezen R.J."/>
        </authorList>
    </citation>
    <scope>NUCLEOTIDE SEQUENCE [LARGE SCALE GENOMIC DNA]</scope>
    <source>
        <strain>ATCC BAA-793 / NCIMB 8826 / WCFS1</strain>
    </source>
</reference>
<reference key="2">
    <citation type="journal article" date="2012" name="J. Bacteriol.">
        <title>Complete resequencing and reannotation of the Lactobacillus plantarum WCFS1 genome.</title>
        <authorList>
            <person name="Siezen R.J."/>
            <person name="Francke C."/>
            <person name="Renckens B."/>
            <person name="Boekhorst J."/>
            <person name="Wels M."/>
            <person name="Kleerebezem M."/>
            <person name="van Hijum S.A."/>
        </authorList>
    </citation>
    <scope>NUCLEOTIDE SEQUENCE [LARGE SCALE GENOMIC DNA]</scope>
    <scope>GENOME REANNOTATION</scope>
    <source>
        <strain>ATCC BAA-793 / NCIMB 8826 / WCFS1</strain>
    </source>
</reference>
<dbReference type="EC" id="5.4.2.10" evidence="1"/>
<dbReference type="EMBL" id="AL935263">
    <property type="protein sequence ID" value="CCC78278.1"/>
    <property type="molecule type" value="Genomic_DNA"/>
</dbReference>
<dbReference type="RefSeq" id="WP_011101166.1">
    <property type="nucleotide sequence ID" value="NC_004567.2"/>
</dbReference>
<dbReference type="RefSeq" id="YP_004888792.1">
    <property type="nucleotide sequence ID" value="NC_004567.2"/>
</dbReference>
<dbReference type="SMR" id="Q88YE8"/>
<dbReference type="STRING" id="220668.lp_0820"/>
<dbReference type="EnsemblBacteria" id="CCC78278">
    <property type="protein sequence ID" value="CCC78278"/>
    <property type="gene ID" value="lp_0820"/>
</dbReference>
<dbReference type="KEGG" id="lpl:lp_0820"/>
<dbReference type="PATRIC" id="fig|220668.9.peg.695"/>
<dbReference type="eggNOG" id="COG1109">
    <property type="taxonomic scope" value="Bacteria"/>
</dbReference>
<dbReference type="HOGENOM" id="CLU_016950_7_0_9"/>
<dbReference type="OrthoDB" id="9806956at2"/>
<dbReference type="PhylomeDB" id="Q88YE8"/>
<dbReference type="Proteomes" id="UP000000432">
    <property type="component" value="Chromosome"/>
</dbReference>
<dbReference type="GO" id="GO:0005829">
    <property type="term" value="C:cytosol"/>
    <property type="evidence" value="ECO:0007669"/>
    <property type="project" value="TreeGrafter"/>
</dbReference>
<dbReference type="GO" id="GO:0000287">
    <property type="term" value="F:magnesium ion binding"/>
    <property type="evidence" value="ECO:0007669"/>
    <property type="project" value="UniProtKB-UniRule"/>
</dbReference>
<dbReference type="GO" id="GO:0008966">
    <property type="term" value="F:phosphoglucosamine mutase activity"/>
    <property type="evidence" value="ECO:0007669"/>
    <property type="project" value="UniProtKB-UniRule"/>
</dbReference>
<dbReference type="GO" id="GO:0004615">
    <property type="term" value="F:phosphomannomutase activity"/>
    <property type="evidence" value="ECO:0007669"/>
    <property type="project" value="TreeGrafter"/>
</dbReference>
<dbReference type="GO" id="GO:0005975">
    <property type="term" value="P:carbohydrate metabolic process"/>
    <property type="evidence" value="ECO:0007669"/>
    <property type="project" value="InterPro"/>
</dbReference>
<dbReference type="GO" id="GO:0009252">
    <property type="term" value="P:peptidoglycan biosynthetic process"/>
    <property type="evidence" value="ECO:0007669"/>
    <property type="project" value="TreeGrafter"/>
</dbReference>
<dbReference type="GO" id="GO:0006048">
    <property type="term" value="P:UDP-N-acetylglucosamine biosynthetic process"/>
    <property type="evidence" value="ECO:0007669"/>
    <property type="project" value="TreeGrafter"/>
</dbReference>
<dbReference type="CDD" id="cd05802">
    <property type="entry name" value="GlmM"/>
    <property type="match status" value="1"/>
</dbReference>
<dbReference type="FunFam" id="3.30.310.50:FF:000001">
    <property type="entry name" value="Phosphoglucosamine mutase"/>
    <property type="match status" value="1"/>
</dbReference>
<dbReference type="FunFam" id="3.40.120.10:FF:000001">
    <property type="entry name" value="Phosphoglucosamine mutase"/>
    <property type="match status" value="1"/>
</dbReference>
<dbReference type="FunFam" id="3.40.120.10:FF:000002">
    <property type="entry name" value="Phosphoglucosamine mutase"/>
    <property type="match status" value="1"/>
</dbReference>
<dbReference type="Gene3D" id="3.40.120.10">
    <property type="entry name" value="Alpha-D-Glucose-1,6-Bisphosphate, subunit A, domain 3"/>
    <property type="match status" value="3"/>
</dbReference>
<dbReference type="Gene3D" id="3.30.310.50">
    <property type="entry name" value="Alpha-D-phosphohexomutase, C-terminal domain"/>
    <property type="match status" value="1"/>
</dbReference>
<dbReference type="HAMAP" id="MF_01554_B">
    <property type="entry name" value="GlmM_B"/>
    <property type="match status" value="1"/>
</dbReference>
<dbReference type="InterPro" id="IPR005844">
    <property type="entry name" value="A-D-PHexomutase_a/b/a-I"/>
</dbReference>
<dbReference type="InterPro" id="IPR016055">
    <property type="entry name" value="A-D-PHexomutase_a/b/a-I/II/III"/>
</dbReference>
<dbReference type="InterPro" id="IPR005845">
    <property type="entry name" value="A-D-PHexomutase_a/b/a-II"/>
</dbReference>
<dbReference type="InterPro" id="IPR005846">
    <property type="entry name" value="A-D-PHexomutase_a/b/a-III"/>
</dbReference>
<dbReference type="InterPro" id="IPR005843">
    <property type="entry name" value="A-D-PHexomutase_C"/>
</dbReference>
<dbReference type="InterPro" id="IPR036900">
    <property type="entry name" value="A-D-PHexomutase_C_sf"/>
</dbReference>
<dbReference type="InterPro" id="IPR016066">
    <property type="entry name" value="A-D-PHexomutase_CS"/>
</dbReference>
<dbReference type="InterPro" id="IPR005841">
    <property type="entry name" value="Alpha-D-phosphohexomutase_SF"/>
</dbReference>
<dbReference type="InterPro" id="IPR018247">
    <property type="entry name" value="EF_Hand_1_Ca_BS"/>
</dbReference>
<dbReference type="InterPro" id="IPR006352">
    <property type="entry name" value="GlmM_bact"/>
</dbReference>
<dbReference type="InterPro" id="IPR050060">
    <property type="entry name" value="Phosphoglucosamine_mutase"/>
</dbReference>
<dbReference type="NCBIfam" id="TIGR01455">
    <property type="entry name" value="glmM"/>
    <property type="match status" value="1"/>
</dbReference>
<dbReference type="PANTHER" id="PTHR42946:SF1">
    <property type="entry name" value="PHOSPHOGLUCOMUTASE (ALPHA-D-GLUCOSE-1,6-BISPHOSPHATE-DEPENDENT)"/>
    <property type="match status" value="1"/>
</dbReference>
<dbReference type="PANTHER" id="PTHR42946">
    <property type="entry name" value="PHOSPHOHEXOSE MUTASE"/>
    <property type="match status" value="1"/>
</dbReference>
<dbReference type="Pfam" id="PF02878">
    <property type="entry name" value="PGM_PMM_I"/>
    <property type="match status" value="1"/>
</dbReference>
<dbReference type="Pfam" id="PF02879">
    <property type="entry name" value="PGM_PMM_II"/>
    <property type="match status" value="1"/>
</dbReference>
<dbReference type="Pfam" id="PF02880">
    <property type="entry name" value="PGM_PMM_III"/>
    <property type="match status" value="1"/>
</dbReference>
<dbReference type="Pfam" id="PF00408">
    <property type="entry name" value="PGM_PMM_IV"/>
    <property type="match status" value="1"/>
</dbReference>
<dbReference type="PRINTS" id="PR00509">
    <property type="entry name" value="PGMPMM"/>
</dbReference>
<dbReference type="SUPFAM" id="SSF55957">
    <property type="entry name" value="Phosphoglucomutase, C-terminal domain"/>
    <property type="match status" value="1"/>
</dbReference>
<dbReference type="SUPFAM" id="SSF53738">
    <property type="entry name" value="Phosphoglucomutase, first 3 domains"/>
    <property type="match status" value="3"/>
</dbReference>
<dbReference type="PROSITE" id="PS00710">
    <property type="entry name" value="PGM_PMM"/>
    <property type="match status" value="1"/>
</dbReference>
<evidence type="ECO:0000255" key="1">
    <source>
        <dbReference type="HAMAP-Rule" id="MF_01554"/>
    </source>
</evidence>
<organism>
    <name type="scientific">Lactiplantibacillus plantarum (strain ATCC BAA-793 / NCIMB 8826 / WCFS1)</name>
    <name type="common">Lactobacillus plantarum</name>
    <dbReference type="NCBI Taxonomy" id="220668"/>
    <lineage>
        <taxon>Bacteria</taxon>
        <taxon>Bacillati</taxon>
        <taxon>Bacillota</taxon>
        <taxon>Bacilli</taxon>
        <taxon>Lactobacillales</taxon>
        <taxon>Lactobacillaceae</taxon>
        <taxon>Lactiplantibacillus</taxon>
    </lineage>
</organism>
<keyword id="KW-0413">Isomerase</keyword>
<keyword id="KW-0460">Magnesium</keyword>
<keyword id="KW-0479">Metal-binding</keyword>
<keyword id="KW-0597">Phosphoprotein</keyword>
<keyword id="KW-1185">Reference proteome</keyword>
<name>GLMM_LACPL</name>
<protein>
    <recommendedName>
        <fullName evidence="1">Phosphoglucosamine mutase</fullName>
        <ecNumber evidence="1">5.4.2.10</ecNumber>
    </recommendedName>
</protein>
<sequence>MKYFGTDGVRGIANSGLTPEMAFRLGRAGGYVLTEHAENKSTQPRVLVARDTRISGQMLEEALIAGLLSAGIEVLRLGVITTPGVAYLVRIQDADAGVMISASHNPVEDNGIKFFGGDGFKLSDAKEEEIEELLDQPKDTLPRPAAEGLGTVADFPEGNLKYSQFLEQTIPDDLSGIHLAVDGANGSTSNLVSRIFADLNVEFDTMATAPDGLNINKGVGSTHPEALSKFVVEKGAQVGLAFDGDGDRCIAVDELGNIIDGDKIMYICGKFLSERGKLKQDTVVTTVMSNLGLYKALEAAGLHSKQTQVGDRYVVEEMLKDGYNLGGEQSGHVVFLDFNTTGDGMLTGIQLLHVMKETGKKLSELAAEVTTYPQKLVNVKVQDKKAALNNDKIKAVIKDVEDEMAGDGRVLVRPSGTQDLLRVMAEAKTDELVSAYVDRIVDVVKAEVGIE</sequence>
<proteinExistence type="inferred from homology"/>